<keyword id="KW-0249">Electron transport</keyword>
<keyword id="KW-0472">Membrane</keyword>
<keyword id="KW-0496">Mitochondrion</keyword>
<keyword id="KW-0999">Mitochondrion inner membrane</keyword>
<keyword id="KW-0520">NAD</keyword>
<keyword id="KW-1185">Reference proteome</keyword>
<keyword id="KW-0679">Respiratory chain</keyword>
<keyword id="KW-1278">Translocase</keyword>
<keyword id="KW-0812">Transmembrane</keyword>
<keyword id="KW-1133">Transmembrane helix</keyword>
<keyword id="KW-0813">Transport</keyword>
<keyword id="KW-0830">Ubiquinone</keyword>
<comment type="function">
    <text evidence="1">Core subunit of the mitochondrial membrane respiratory chain NADH dehydrogenase (Complex I) which catalyzes electron transfer from NADH through the respiratory chain, using ubiquinone as an electron acceptor. Essential for the catalytic activity of complex I.</text>
</comment>
<comment type="catalytic activity">
    <reaction evidence="1">
        <text>a ubiquinone + NADH + 5 H(+)(in) = a ubiquinol + NAD(+) + 4 H(+)(out)</text>
        <dbReference type="Rhea" id="RHEA:29091"/>
        <dbReference type="Rhea" id="RHEA-COMP:9565"/>
        <dbReference type="Rhea" id="RHEA-COMP:9566"/>
        <dbReference type="ChEBI" id="CHEBI:15378"/>
        <dbReference type="ChEBI" id="CHEBI:16389"/>
        <dbReference type="ChEBI" id="CHEBI:17976"/>
        <dbReference type="ChEBI" id="CHEBI:57540"/>
        <dbReference type="ChEBI" id="CHEBI:57945"/>
        <dbReference type="EC" id="7.1.1.2"/>
    </reaction>
</comment>
<comment type="subunit">
    <text evidence="1">Core subunit of respiratory chain NADH dehydrogenase (Complex I) which is composed of 45 different subunits. Interacts with TMEM186. Interacts with TMEM242 (By similarity).</text>
</comment>
<comment type="subcellular location">
    <subcellularLocation>
        <location evidence="2">Mitochondrion inner membrane</location>
        <topology evidence="3">Multi-pass membrane protein</topology>
    </subcellularLocation>
</comment>
<comment type="similarity">
    <text evidence="4">Belongs to the complex I subunit 3 family.</text>
</comment>
<accession>P92482</accession>
<geneLocation type="mitochondrion"/>
<reference key="1">
    <citation type="journal article" date="1996" name="J. Mol. Evol.">
        <title>The complete mitochondrial DNA (mtDNA) of the donkey and mtDNA comparisons among four closely related mammalian species-pairs.</title>
        <authorList>
            <person name="Xu X."/>
            <person name="Gullberg A."/>
            <person name="Arnason U."/>
        </authorList>
    </citation>
    <scope>NUCLEOTIDE SEQUENCE [GENOMIC DNA]</scope>
    <source>
        <tissue>Kidney</tissue>
    </source>
</reference>
<evidence type="ECO:0000250" key="1">
    <source>
        <dbReference type="UniProtKB" id="P03897"/>
    </source>
</evidence>
<evidence type="ECO:0000250" key="2">
    <source>
        <dbReference type="UniProtKB" id="P03898"/>
    </source>
</evidence>
<evidence type="ECO:0000255" key="3"/>
<evidence type="ECO:0000305" key="4"/>
<name>NU3M_EQUAS</name>
<organism>
    <name type="scientific">Equus asinus</name>
    <name type="common">Donkey</name>
    <name type="synonym">Equus africanus asinus</name>
    <dbReference type="NCBI Taxonomy" id="9793"/>
    <lineage>
        <taxon>Eukaryota</taxon>
        <taxon>Metazoa</taxon>
        <taxon>Chordata</taxon>
        <taxon>Craniata</taxon>
        <taxon>Vertebrata</taxon>
        <taxon>Euteleostomi</taxon>
        <taxon>Mammalia</taxon>
        <taxon>Eutheria</taxon>
        <taxon>Laurasiatheria</taxon>
        <taxon>Perissodactyla</taxon>
        <taxon>Equidae</taxon>
        <taxon>Equus</taxon>
    </lineage>
</organism>
<feature type="chain" id="PRO_0000117742" description="NADH-ubiquinone oxidoreductase chain 3">
    <location>
        <begin position="1"/>
        <end position="115"/>
    </location>
</feature>
<feature type="transmembrane region" description="Helical" evidence="3">
    <location>
        <begin position="3"/>
        <end position="23"/>
    </location>
</feature>
<feature type="transmembrane region" description="Helical" evidence="3">
    <location>
        <begin position="55"/>
        <end position="75"/>
    </location>
</feature>
<feature type="transmembrane region" description="Helical" evidence="3">
    <location>
        <begin position="84"/>
        <end position="104"/>
    </location>
</feature>
<protein>
    <recommendedName>
        <fullName evidence="1">NADH-ubiquinone oxidoreductase chain 3</fullName>
        <ecNumber evidence="1">7.1.1.2</ecNumber>
    </recommendedName>
    <alternativeName>
        <fullName>NADH dehydrogenase subunit 3</fullName>
    </alternativeName>
</protein>
<sequence>MNLMLTLLTNTLLASLLVLIAFWLPQLNIYAEKTSPYECGFDPMGSARLPFSMKFFLVAITFLLFDLEIALLLPLPWASQTTNLNTMLIMALILISLLAISLAYEWTQKGLEWTE</sequence>
<proteinExistence type="inferred from homology"/>
<dbReference type="EC" id="7.1.1.2" evidence="1"/>
<dbReference type="EMBL" id="X97337">
    <property type="protein sequence ID" value="CAA66021.1"/>
    <property type="molecule type" value="Genomic_DNA"/>
</dbReference>
<dbReference type="PIR" id="T11370">
    <property type="entry name" value="T11370"/>
</dbReference>
<dbReference type="RefSeq" id="NP_007388.1">
    <property type="nucleotide sequence ID" value="NC_001788.1"/>
</dbReference>
<dbReference type="SMR" id="P92482"/>
<dbReference type="GeneID" id="808060"/>
<dbReference type="KEGG" id="eai:808060"/>
<dbReference type="CTD" id="4537"/>
<dbReference type="Proteomes" id="UP000694387">
    <property type="component" value="Mitochondrion MT"/>
</dbReference>
<dbReference type="GO" id="GO:0005743">
    <property type="term" value="C:mitochondrial inner membrane"/>
    <property type="evidence" value="ECO:0000250"/>
    <property type="project" value="UniProtKB"/>
</dbReference>
<dbReference type="GO" id="GO:0030964">
    <property type="term" value="C:NADH dehydrogenase complex"/>
    <property type="evidence" value="ECO:0007669"/>
    <property type="project" value="TreeGrafter"/>
</dbReference>
<dbReference type="GO" id="GO:0008137">
    <property type="term" value="F:NADH dehydrogenase (ubiquinone) activity"/>
    <property type="evidence" value="ECO:0000250"/>
    <property type="project" value="UniProtKB"/>
</dbReference>
<dbReference type="GO" id="GO:0006120">
    <property type="term" value="P:mitochondrial electron transport, NADH to ubiquinone"/>
    <property type="evidence" value="ECO:0000250"/>
    <property type="project" value="UniProtKB"/>
</dbReference>
<dbReference type="FunFam" id="1.20.58.1610:FF:000004">
    <property type="entry name" value="NADH-quinone oxidoreductase subunit A"/>
    <property type="match status" value="1"/>
</dbReference>
<dbReference type="Gene3D" id="1.20.58.1610">
    <property type="entry name" value="NADH:ubiquinone/plastoquinone oxidoreductase, chain 3"/>
    <property type="match status" value="1"/>
</dbReference>
<dbReference type="InterPro" id="IPR000440">
    <property type="entry name" value="NADH_UbQ/plastoQ_OxRdtase_su3"/>
</dbReference>
<dbReference type="InterPro" id="IPR038430">
    <property type="entry name" value="NDAH_ubi_oxred_su3_sf"/>
</dbReference>
<dbReference type="PANTHER" id="PTHR11058">
    <property type="entry name" value="NADH-UBIQUINONE OXIDOREDUCTASE CHAIN 3"/>
    <property type="match status" value="1"/>
</dbReference>
<dbReference type="PANTHER" id="PTHR11058:SF9">
    <property type="entry name" value="NADH-UBIQUINONE OXIDOREDUCTASE CHAIN 3"/>
    <property type="match status" value="1"/>
</dbReference>
<dbReference type="Pfam" id="PF00507">
    <property type="entry name" value="Oxidored_q4"/>
    <property type="match status" value="1"/>
</dbReference>
<gene>
    <name evidence="1" type="primary">MT-ND3</name>
    <name type="synonym">MTND3</name>
    <name type="synonym">NADH3</name>
    <name type="synonym">ND3</name>
</gene>